<gene>
    <name type="primary">GC5</name>
    <name type="ordered locus">At1g79830</name>
    <name type="ORF">F19K16.21</name>
</gene>
<comment type="function">
    <text evidence="1">Golgi matrix protein playing a role in tethering of vesicles to Golgi membranes and in maintaining the overall structure of the Golgi apparatus.</text>
</comment>
<comment type="subunit">
    <text evidence="4">Interacts with RABH1B and RABH1C, but not with RABD1 or RABD2A.</text>
</comment>
<comment type="subcellular location">
    <subcellularLocation>
        <location evidence="4">Golgi apparatus</location>
    </subcellularLocation>
    <subcellularLocation>
        <location evidence="4">Cytoplasm</location>
    </subcellularLocation>
    <text>May be located to the trans-Golgi or trans-Golgi network (TGN).</text>
</comment>
<comment type="alternative products">
    <event type="alternative splicing"/>
    <isoform>
        <id>Q0WVL7-1</id>
        <name>1</name>
        <sequence type="displayed"/>
    </isoform>
    <text>A number of isoforms are produced. According to EST sequences.</text>
</comment>
<comment type="domain">
    <text>The C-terminal domain (817-956) is necessary and sufficient for Golgi and cytoplasm targeting.</text>
</comment>
<comment type="sequence caution" evidence="5">
    <conflict type="erroneous gene model prediction">
        <sequence resource="EMBL-CDS" id="AAG52248"/>
    </conflict>
</comment>
<comment type="sequence caution" evidence="5">
    <conflict type="erroneous initiation">
        <sequence resource="EMBL-CDS" id="BAD94181"/>
    </conflict>
</comment>
<feature type="chain" id="PRO_0000348539" description="Golgin candidate 5">
    <location>
        <begin position="1"/>
        <end position="956"/>
    </location>
</feature>
<feature type="region of interest" description="Disordered" evidence="3">
    <location>
        <begin position="70"/>
        <end position="230"/>
    </location>
</feature>
<feature type="region of interest" description="Disordered" evidence="3">
    <location>
        <begin position="278"/>
        <end position="298"/>
    </location>
</feature>
<feature type="coiled-coil region" evidence="2">
    <location>
        <begin position="333"/>
        <end position="765"/>
    </location>
</feature>
<feature type="coiled-coil region" evidence="2">
    <location>
        <begin position="851"/>
        <end position="951"/>
    </location>
</feature>
<feature type="compositionally biased region" description="Basic and acidic residues" evidence="3">
    <location>
        <begin position="77"/>
        <end position="89"/>
    </location>
</feature>
<feature type="compositionally biased region" description="Basic and acidic residues" evidence="3">
    <location>
        <begin position="118"/>
        <end position="129"/>
    </location>
</feature>
<feature type="compositionally biased region" description="Polar residues" evidence="3">
    <location>
        <begin position="160"/>
        <end position="177"/>
    </location>
</feature>
<feature type="compositionally biased region" description="Polar residues" evidence="3">
    <location>
        <begin position="184"/>
        <end position="193"/>
    </location>
</feature>
<feature type="compositionally biased region" description="Basic and acidic residues" evidence="3">
    <location>
        <begin position="206"/>
        <end position="219"/>
    </location>
</feature>
<feature type="modified residue" description="Phosphoserine" evidence="6 7">
    <location>
        <position position="793"/>
    </location>
</feature>
<feature type="sequence conflict" description="In Ref. 4; BAD94181." evidence="5" ref="4">
    <original>N</original>
    <variation>D</variation>
    <location>
        <position position="670"/>
    </location>
</feature>
<feature type="sequence conflict" description="In Ref. 4; BAD94181." evidence="5" ref="4">
    <original>L</original>
    <variation>F</variation>
    <location>
        <position position="786"/>
    </location>
</feature>
<proteinExistence type="evidence at protein level"/>
<protein>
    <recommendedName>
        <fullName>Golgin candidate 5</fullName>
        <shortName>AtGC5</shortName>
    </recommendedName>
</protein>
<accession>Q0WVL7</accession>
<accession>Q56X06</accession>
<accession>Q9CA88</accession>
<sequence>MAWFSGKVSLGGFPDLTGAVNKFQESVKNIEKNFDNALGFDDKSDSAAEDAASSMWPPAVDTKSLFDPVMSFMGNTSDEKPDTLEDSVRTENPSQIEQKEEEAGSVKLATEQAVSVEANKETNVRREADQADNPEVTETVVLDPKDDEPQSQILLEESSEYSLQTPESSGYKTSLQPNEKLEMTASQDSQPEQPKSEAEESQPEDSEAKEVTVENKDTVHSPVLDGQHKITYMDETTNEQEILGENLEGRTSSKNFEVSPDINHVNRIESPVAHPSLIFESDGSPYESSIPKRSSSDEISERIVDFVSREIDSRLDTSELNESQRSSSATNVSDSADVILELEKTKKEIKMLENALQGAARQAQAKADEIAKLMHENEQLKSVTEDLKRKSNEAEVESLREEYHQRVATLERKVYALTKERDTLRREQNKKSDAAALLKEKDEIINQVMAEGEELSKKQAAQEAQIRKLRAQIREAEEEKKGLITKLQSEENKVESIKRDKTATEKLLQETIEKHQAELTSQKDYYSNALAAAKEAQALAEERTNNEARSELENRLKEAGERESMLVQALEELRQTLSKKEQQAVYREDMFRGEIEDLQRRYQASERRCEELITQVPESTRPLLRQIEAMQETSYRTAEAWAAVERTLNSRLQEAESKAATAEERERSVNERLSQTLSRINVLEAQLSCLRAEQGQLSKSLEKERQRAAENRQEYLAAKEEADTLEGRANQLEVEIRELRRKHKQELQEVLLHNELIQKDLEREKASRLDLERTARINSSAVSEQLPIARQNSAFENGSLPRKLSSASSLGSMEESYFLQASLDSSDKFSEKRSMPEATMSPYYMKSITPSAYEATLRQKEGELASYMTRLASMESIRDSLAEELVKMTAECEKLRGEADRVPGIKAELEALRQRHAAALELMGERDEELEELRADIVDLKEMYREQVNMLVNKIQ</sequence>
<name>GOGC5_ARATH</name>
<keyword id="KW-0025">Alternative splicing</keyword>
<keyword id="KW-0175">Coiled coil</keyword>
<keyword id="KW-0963">Cytoplasm</keyword>
<keyword id="KW-0333">Golgi apparatus</keyword>
<keyword id="KW-0597">Phosphoprotein</keyword>
<keyword id="KW-1185">Reference proteome</keyword>
<dbReference type="EMBL" id="EU249329">
    <property type="protein sequence ID" value="ABY67249.1"/>
    <property type="molecule type" value="mRNA"/>
</dbReference>
<dbReference type="EMBL" id="AC011717">
    <property type="protein sequence ID" value="AAG52248.1"/>
    <property type="status" value="ALT_SEQ"/>
    <property type="molecule type" value="Genomic_DNA"/>
</dbReference>
<dbReference type="EMBL" id="CP002684">
    <property type="protein sequence ID" value="AEE36307.1"/>
    <property type="molecule type" value="Genomic_DNA"/>
</dbReference>
<dbReference type="EMBL" id="CP002684">
    <property type="protein sequence ID" value="AEE36308.1"/>
    <property type="molecule type" value="Genomic_DNA"/>
</dbReference>
<dbReference type="EMBL" id="CP002684">
    <property type="protein sequence ID" value="AEE36310.1"/>
    <property type="molecule type" value="Genomic_DNA"/>
</dbReference>
<dbReference type="EMBL" id="AK221873">
    <property type="protein sequence ID" value="BAD94181.1"/>
    <property type="status" value="ALT_INIT"/>
    <property type="molecule type" value="mRNA"/>
</dbReference>
<dbReference type="EMBL" id="AK226727">
    <property type="protein sequence ID" value="BAE98831.1"/>
    <property type="molecule type" value="mRNA"/>
</dbReference>
<dbReference type="PIR" id="C96829">
    <property type="entry name" value="C96829"/>
</dbReference>
<dbReference type="RefSeq" id="NP_001117622.1">
    <molecule id="Q0WVL7-1"/>
    <property type="nucleotide sequence ID" value="NM_001124150.1"/>
</dbReference>
<dbReference type="RefSeq" id="NP_001185442.1">
    <molecule id="Q0WVL7-1"/>
    <property type="nucleotide sequence ID" value="NM_001198513.2"/>
</dbReference>
<dbReference type="RefSeq" id="NP_178101.3">
    <molecule id="Q0WVL7-1"/>
    <property type="nucleotide sequence ID" value="NM_106632.4"/>
</dbReference>
<dbReference type="SMR" id="Q0WVL7"/>
<dbReference type="BioGRID" id="29540">
    <property type="interactions" value="4"/>
</dbReference>
<dbReference type="FunCoup" id="Q0WVL7">
    <property type="interactions" value="3658"/>
</dbReference>
<dbReference type="STRING" id="3702.Q0WVL7"/>
<dbReference type="iPTMnet" id="Q0WVL7"/>
<dbReference type="PaxDb" id="3702-AT1G79830.4"/>
<dbReference type="ProteomicsDB" id="248452">
    <molecule id="Q0WVL7-1"/>
</dbReference>
<dbReference type="EnsemblPlants" id="AT1G79830.1">
    <molecule id="Q0WVL7-1"/>
    <property type="protein sequence ID" value="AT1G79830.1"/>
    <property type="gene ID" value="AT1G79830"/>
</dbReference>
<dbReference type="EnsemblPlants" id="AT1G79830.2">
    <molecule id="Q0WVL7-1"/>
    <property type="protein sequence ID" value="AT1G79830.2"/>
    <property type="gene ID" value="AT1G79830"/>
</dbReference>
<dbReference type="EnsemblPlants" id="AT1G79830.3">
    <molecule id="Q0WVL7-1"/>
    <property type="protein sequence ID" value="AT1G79830.3"/>
    <property type="gene ID" value="AT1G79830"/>
</dbReference>
<dbReference type="GeneID" id="844322"/>
<dbReference type="Gramene" id="AT1G79830.1">
    <molecule id="Q0WVL7-1"/>
    <property type="protein sequence ID" value="AT1G79830.1"/>
    <property type="gene ID" value="AT1G79830"/>
</dbReference>
<dbReference type="Gramene" id="AT1G79830.2">
    <molecule id="Q0WVL7-1"/>
    <property type="protein sequence ID" value="AT1G79830.2"/>
    <property type="gene ID" value="AT1G79830"/>
</dbReference>
<dbReference type="Gramene" id="AT1G79830.3">
    <molecule id="Q0WVL7-1"/>
    <property type="protein sequence ID" value="AT1G79830.3"/>
    <property type="gene ID" value="AT1G79830"/>
</dbReference>
<dbReference type="KEGG" id="ath:AT1G79830"/>
<dbReference type="Araport" id="AT1G79830"/>
<dbReference type="TAIR" id="AT1G79830">
    <property type="gene designation" value="GC5"/>
</dbReference>
<dbReference type="eggNOG" id="KOG4673">
    <property type="taxonomic scope" value="Eukaryota"/>
</dbReference>
<dbReference type="InParanoid" id="Q0WVL7"/>
<dbReference type="PhylomeDB" id="Q0WVL7"/>
<dbReference type="PRO" id="PR:Q0WVL7"/>
<dbReference type="Proteomes" id="UP000006548">
    <property type="component" value="Chromosome 1"/>
</dbReference>
<dbReference type="ExpressionAtlas" id="Q0WVL7">
    <property type="expression patterns" value="baseline and differential"/>
</dbReference>
<dbReference type="GO" id="GO:0005794">
    <property type="term" value="C:Golgi apparatus"/>
    <property type="evidence" value="ECO:0007669"/>
    <property type="project" value="UniProtKB-SubCell"/>
</dbReference>
<dbReference type="InterPro" id="IPR022092">
    <property type="entry name" value="TMF_DNA-bd"/>
</dbReference>
<dbReference type="InterPro" id="IPR022091">
    <property type="entry name" value="TMF_TATA-bd"/>
</dbReference>
<dbReference type="PANTHER" id="PTHR47347">
    <property type="entry name" value="GOLGIN CANDIDATE 5"/>
    <property type="match status" value="1"/>
</dbReference>
<dbReference type="PANTHER" id="PTHR47347:SF2">
    <property type="entry name" value="GOLGIN CANDIDATE 5"/>
    <property type="match status" value="1"/>
</dbReference>
<dbReference type="Pfam" id="PF12329">
    <property type="entry name" value="TMF_DNA_bd"/>
    <property type="match status" value="1"/>
</dbReference>
<dbReference type="Pfam" id="PF12325">
    <property type="entry name" value="TMF_TATA_bd"/>
    <property type="match status" value="1"/>
</dbReference>
<evidence type="ECO:0000250" key="1"/>
<evidence type="ECO:0000255" key="2"/>
<evidence type="ECO:0000256" key="3">
    <source>
        <dbReference type="SAM" id="MobiDB-lite"/>
    </source>
</evidence>
<evidence type="ECO:0000269" key="4">
    <source>
    </source>
</evidence>
<evidence type="ECO:0000305" key="5"/>
<evidence type="ECO:0007744" key="6">
    <source>
    </source>
</evidence>
<evidence type="ECO:0007744" key="7">
    <source>
    </source>
</evidence>
<organism>
    <name type="scientific">Arabidopsis thaliana</name>
    <name type="common">Mouse-ear cress</name>
    <dbReference type="NCBI Taxonomy" id="3702"/>
    <lineage>
        <taxon>Eukaryota</taxon>
        <taxon>Viridiplantae</taxon>
        <taxon>Streptophyta</taxon>
        <taxon>Embryophyta</taxon>
        <taxon>Tracheophyta</taxon>
        <taxon>Spermatophyta</taxon>
        <taxon>Magnoliopsida</taxon>
        <taxon>eudicotyledons</taxon>
        <taxon>Gunneridae</taxon>
        <taxon>Pentapetalae</taxon>
        <taxon>rosids</taxon>
        <taxon>malvids</taxon>
        <taxon>Brassicales</taxon>
        <taxon>Brassicaceae</taxon>
        <taxon>Camelineae</taxon>
        <taxon>Arabidopsis</taxon>
    </lineage>
</organism>
<reference key="1">
    <citation type="journal article" date="2007" name="J. Exp. Bot.">
        <title>Localization and domain characterization of Arabidopsis golgin candidates.</title>
        <authorList>
            <person name="Latijnhouwers M."/>
            <person name="Gillespie T."/>
            <person name="Boevink P."/>
            <person name="Kriechbaumer V."/>
            <person name="Hawes C."/>
            <person name="Carvalho C.M."/>
        </authorList>
    </citation>
    <scope>NUCLEOTIDE SEQUENCE [MRNA]</scope>
    <scope>SUBCELLULAR LOCATION</scope>
    <scope>INTERACTION WITH RABH1B; RABH1C; RABD1 AND RABD2A</scope>
    <scope>GENE FAMILY</scope>
    <scope>NOMENCLATURE</scope>
</reference>
<reference key="2">
    <citation type="journal article" date="2000" name="Nature">
        <title>Sequence and analysis of chromosome 1 of the plant Arabidopsis thaliana.</title>
        <authorList>
            <person name="Theologis A."/>
            <person name="Ecker J.R."/>
            <person name="Palm C.J."/>
            <person name="Federspiel N.A."/>
            <person name="Kaul S."/>
            <person name="White O."/>
            <person name="Alonso J."/>
            <person name="Altafi H."/>
            <person name="Araujo R."/>
            <person name="Bowman C.L."/>
            <person name="Brooks S.Y."/>
            <person name="Buehler E."/>
            <person name="Chan A."/>
            <person name="Chao Q."/>
            <person name="Chen H."/>
            <person name="Cheuk R.F."/>
            <person name="Chin C.W."/>
            <person name="Chung M.K."/>
            <person name="Conn L."/>
            <person name="Conway A.B."/>
            <person name="Conway A.R."/>
            <person name="Creasy T.H."/>
            <person name="Dewar K."/>
            <person name="Dunn P."/>
            <person name="Etgu P."/>
            <person name="Feldblyum T.V."/>
            <person name="Feng J.-D."/>
            <person name="Fong B."/>
            <person name="Fujii C.Y."/>
            <person name="Gill J.E."/>
            <person name="Goldsmith A.D."/>
            <person name="Haas B."/>
            <person name="Hansen N.F."/>
            <person name="Hughes B."/>
            <person name="Huizar L."/>
            <person name="Hunter J.L."/>
            <person name="Jenkins J."/>
            <person name="Johnson-Hopson C."/>
            <person name="Khan S."/>
            <person name="Khaykin E."/>
            <person name="Kim C.J."/>
            <person name="Koo H.L."/>
            <person name="Kremenetskaia I."/>
            <person name="Kurtz D.B."/>
            <person name="Kwan A."/>
            <person name="Lam B."/>
            <person name="Langin-Hooper S."/>
            <person name="Lee A."/>
            <person name="Lee J.M."/>
            <person name="Lenz C.A."/>
            <person name="Li J.H."/>
            <person name="Li Y.-P."/>
            <person name="Lin X."/>
            <person name="Liu S.X."/>
            <person name="Liu Z.A."/>
            <person name="Luros J.S."/>
            <person name="Maiti R."/>
            <person name="Marziali A."/>
            <person name="Militscher J."/>
            <person name="Miranda M."/>
            <person name="Nguyen M."/>
            <person name="Nierman W.C."/>
            <person name="Osborne B.I."/>
            <person name="Pai G."/>
            <person name="Peterson J."/>
            <person name="Pham P.K."/>
            <person name="Rizzo M."/>
            <person name="Rooney T."/>
            <person name="Rowley D."/>
            <person name="Sakano H."/>
            <person name="Salzberg S.L."/>
            <person name="Schwartz J.R."/>
            <person name="Shinn P."/>
            <person name="Southwick A.M."/>
            <person name="Sun H."/>
            <person name="Tallon L.J."/>
            <person name="Tambunga G."/>
            <person name="Toriumi M.J."/>
            <person name="Town C.D."/>
            <person name="Utterback T."/>
            <person name="Van Aken S."/>
            <person name="Vaysberg M."/>
            <person name="Vysotskaia V.S."/>
            <person name="Walker M."/>
            <person name="Wu D."/>
            <person name="Yu G."/>
            <person name="Fraser C.M."/>
            <person name="Venter J.C."/>
            <person name="Davis R.W."/>
        </authorList>
    </citation>
    <scope>NUCLEOTIDE SEQUENCE [LARGE SCALE GENOMIC DNA]</scope>
    <source>
        <strain>cv. Columbia</strain>
    </source>
</reference>
<reference key="3">
    <citation type="journal article" date="2017" name="Plant J.">
        <title>Araport11: a complete reannotation of the Arabidopsis thaliana reference genome.</title>
        <authorList>
            <person name="Cheng C.Y."/>
            <person name="Krishnakumar V."/>
            <person name="Chan A.P."/>
            <person name="Thibaud-Nissen F."/>
            <person name="Schobel S."/>
            <person name="Town C.D."/>
        </authorList>
    </citation>
    <scope>GENOME REANNOTATION</scope>
    <source>
        <strain>cv. Columbia</strain>
    </source>
</reference>
<reference key="4">
    <citation type="submission" date="2006-07" db="EMBL/GenBank/DDBJ databases">
        <title>Large-scale analysis of RIKEN Arabidopsis full-length (RAFL) cDNAs.</title>
        <authorList>
            <person name="Totoki Y."/>
            <person name="Seki M."/>
            <person name="Ishida J."/>
            <person name="Nakajima M."/>
            <person name="Enju A."/>
            <person name="Kamiya A."/>
            <person name="Narusaka M."/>
            <person name="Shin-i T."/>
            <person name="Nakagawa M."/>
            <person name="Sakamoto N."/>
            <person name="Oishi K."/>
            <person name="Kohara Y."/>
            <person name="Kobayashi M."/>
            <person name="Toyoda A."/>
            <person name="Sakaki Y."/>
            <person name="Sakurai T."/>
            <person name="Iida K."/>
            <person name="Akiyama K."/>
            <person name="Satou M."/>
            <person name="Toyoda T."/>
            <person name="Konagaya A."/>
            <person name="Carninci P."/>
            <person name="Kawai J."/>
            <person name="Hayashizaki Y."/>
            <person name="Shinozaki K."/>
        </authorList>
    </citation>
    <scope>NUCLEOTIDE SEQUENCE [LARGE SCALE MRNA]</scope>
    <source>
        <strain>cv. Columbia</strain>
    </source>
</reference>
<reference key="5">
    <citation type="journal article" date="2009" name="J. Proteomics">
        <title>Phosphoproteomic analysis of nuclei-enriched fractions from Arabidopsis thaliana.</title>
        <authorList>
            <person name="Jones A.M.E."/>
            <person name="MacLean D."/>
            <person name="Studholme D.J."/>
            <person name="Serna-Sanz A."/>
            <person name="Andreasson E."/>
            <person name="Rathjen J.P."/>
            <person name="Peck S.C."/>
        </authorList>
    </citation>
    <scope>PHOSPHORYLATION [LARGE SCALE ANALYSIS] AT SER-793</scope>
    <scope>IDENTIFICATION BY MASS SPECTROMETRY [LARGE SCALE ANALYSIS]</scope>
    <source>
        <strain>cv. Columbia</strain>
    </source>
</reference>
<reference key="6">
    <citation type="journal article" date="2009" name="Plant Physiol.">
        <title>Large-scale Arabidopsis phosphoproteome profiling reveals novel chloroplast kinase substrates and phosphorylation networks.</title>
        <authorList>
            <person name="Reiland S."/>
            <person name="Messerli G."/>
            <person name="Baerenfaller K."/>
            <person name="Gerrits B."/>
            <person name="Endler A."/>
            <person name="Grossmann J."/>
            <person name="Gruissem W."/>
            <person name="Baginsky S."/>
        </authorList>
    </citation>
    <scope>PHOSPHORYLATION [LARGE SCALE ANALYSIS] AT SER-793</scope>
    <scope>IDENTIFICATION BY MASS SPECTROMETRY [LARGE SCALE ANALYSIS]</scope>
</reference>